<sequence length="226" mass="25642">MLLRIANVFSREETARIRVALEQAAWQDGRVTAGYQSAKAKHNLQLAEDDPLAREIAEAMLQRLWQHPQFMSAALPSKVFPPLFNCYTAGGEFGYHIDNAVRQVRNSAERVRTDLSATLFFSDPDEYDGGDLVIQDTYGTQRVKFAAGDMVLYPSTSLHKVEPVTRGARLASFFWIQSLVREDAQRTLLYEMDQAIQQLTADVPDHPSLVQLTGTYHNLLRRWVEV</sequence>
<protein>
    <recommendedName>
        <fullName evidence="1">PKHD-type hydroxylase PST_0995</fullName>
        <ecNumber evidence="1">1.14.11.-</ecNumber>
    </recommendedName>
</protein>
<accession>A4VI91</accession>
<name>Y995_STUS1</name>
<gene>
    <name type="ordered locus">PST_0995</name>
</gene>
<comment type="cofactor">
    <cofactor evidence="1">
        <name>Fe(2+)</name>
        <dbReference type="ChEBI" id="CHEBI:29033"/>
    </cofactor>
    <text evidence="1">Binds 1 Fe(2+) ion per subunit.</text>
</comment>
<comment type="cofactor">
    <cofactor evidence="1">
        <name>L-ascorbate</name>
        <dbReference type="ChEBI" id="CHEBI:38290"/>
    </cofactor>
</comment>
<evidence type="ECO:0000255" key="1">
    <source>
        <dbReference type="HAMAP-Rule" id="MF_00657"/>
    </source>
</evidence>
<dbReference type="EC" id="1.14.11.-" evidence="1"/>
<dbReference type="EMBL" id="CP000304">
    <property type="protein sequence ID" value="ABP78692.1"/>
    <property type="molecule type" value="Genomic_DNA"/>
</dbReference>
<dbReference type="RefSeq" id="WP_011912183.1">
    <property type="nucleotide sequence ID" value="NC_009434.1"/>
</dbReference>
<dbReference type="SMR" id="A4VI91"/>
<dbReference type="KEGG" id="psa:PST_0995"/>
<dbReference type="eggNOG" id="COG3128">
    <property type="taxonomic scope" value="Bacteria"/>
</dbReference>
<dbReference type="HOGENOM" id="CLU_106663_0_0_6"/>
<dbReference type="Proteomes" id="UP000000233">
    <property type="component" value="Chromosome"/>
</dbReference>
<dbReference type="GO" id="GO:0016706">
    <property type="term" value="F:2-oxoglutarate-dependent dioxygenase activity"/>
    <property type="evidence" value="ECO:0007669"/>
    <property type="project" value="UniProtKB-UniRule"/>
</dbReference>
<dbReference type="GO" id="GO:0005506">
    <property type="term" value="F:iron ion binding"/>
    <property type="evidence" value="ECO:0007669"/>
    <property type="project" value="UniProtKB-UniRule"/>
</dbReference>
<dbReference type="GO" id="GO:0031418">
    <property type="term" value="F:L-ascorbic acid binding"/>
    <property type="evidence" value="ECO:0007669"/>
    <property type="project" value="UniProtKB-KW"/>
</dbReference>
<dbReference type="GO" id="GO:0006974">
    <property type="term" value="P:DNA damage response"/>
    <property type="evidence" value="ECO:0007669"/>
    <property type="project" value="TreeGrafter"/>
</dbReference>
<dbReference type="GO" id="GO:0006879">
    <property type="term" value="P:intracellular iron ion homeostasis"/>
    <property type="evidence" value="ECO:0007669"/>
    <property type="project" value="TreeGrafter"/>
</dbReference>
<dbReference type="FunFam" id="2.60.120.620:FF:000006">
    <property type="entry name" value="PKHD-type hydroxylase YbiX"/>
    <property type="match status" value="1"/>
</dbReference>
<dbReference type="Gene3D" id="2.60.120.620">
    <property type="entry name" value="q2cbj1_9rhob like domain"/>
    <property type="match status" value="1"/>
</dbReference>
<dbReference type="Gene3D" id="4.10.860.20">
    <property type="entry name" value="Rabenosyn, Rab binding domain"/>
    <property type="match status" value="1"/>
</dbReference>
<dbReference type="HAMAP" id="MF_00657">
    <property type="entry name" value="Hydroxyl_YbiX"/>
    <property type="match status" value="1"/>
</dbReference>
<dbReference type="InterPro" id="IPR005123">
    <property type="entry name" value="Oxoglu/Fe-dep_dioxygenase_dom"/>
</dbReference>
<dbReference type="InterPro" id="IPR041097">
    <property type="entry name" value="PKHD_C"/>
</dbReference>
<dbReference type="InterPro" id="IPR023550">
    <property type="entry name" value="PKHD_hydroxylase"/>
</dbReference>
<dbReference type="InterPro" id="IPR006620">
    <property type="entry name" value="Pro_4_hyd_alph"/>
</dbReference>
<dbReference type="InterPro" id="IPR044862">
    <property type="entry name" value="Pro_4_hyd_alph_FE2OG_OXY"/>
</dbReference>
<dbReference type="NCBIfam" id="NF003974">
    <property type="entry name" value="PRK05467.1-3"/>
    <property type="match status" value="1"/>
</dbReference>
<dbReference type="NCBIfam" id="NF003975">
    <property type="entry name" value="PRK05467.1-4"/>
    <property type="match status" value="1"/>
</dbReference>
<dbReference type="PANTHER" id="PTHR41536">
    <property type="entry name" value="PKHD-TYPE HYDROXYLASE YBIX"/>
    <property type="match status" value="1"/>
</dbReference>
<dbReference type="PANTHER" id="PTHR41536:SF1">
    <property type="entry name" value="PKHD-TYPE HYDROXYLASE YBIX"/>
    <property type="match status" value="1"/>
</dbReference>
<dbReference type="Pfam" id="PF13640">
    <property type="entry name" value="2OG-FeII_Oxy_3"/>
    <property type="match status" value="1"/>
</dbReference>
<dbReference type="Pfam" id="PF18331">
    <property type="entry name" value="PKHD_C"/>
    <property type="match status" value="1"/>
</dbReference>
<dbReference type="SMART" id="SM00702">
    <property type="entry name" value="P4Hc"/>
    <property type="match status" value="1"/>
</dbReference>
<dbReference type="PROSITE" id="PS51471">
    <property type="entry name" value="FE2OG_OXY"/>
    <property type="match status" value="1"/>
</dbReference>
<feature type="chain" id="PRO_1000061733" description="PKHD-type hydroxylase PST_0995">
    <location>
        <begin position="1"/>
        <end position="226"/>
    </location>
</feature>
<feature type="domain" description="Fe2OG dioxygenase" evidence="1">
    <location>
        <begin position="78"/>
        <end position="178"/>
    </location>
</feature>
<feature type="binding site" evidence="1">
    <location>
        <position position="96"/>
    </location>
    <ligand>
        <name>Fe cation</name>
        <dbReference type="ChEBI" id="CHEBI:24875"/>
    </ligand>
</feature>
<feature type="binding site" evidence="1">
    <location>
        <position position="98"/>
    </location>
    <ligand>
        <name>Fe cation</name>
        <dbReference type="ChEBI" id="CHEBI:24875"/>
    </ligand>
</feature>
<feature type="binding site" evidence="1">
    <location>
        <position position="159"/>
    </location>
    <ligand>
        <name>Fe cation</name>
        <dbReference type="ChEBI" id="CHEBI:24875"/>
    </ligand>
</feature>
<feature type="binding site" evidence="1">
    <location>
        <position position="169"/>
    </location>
    <ligand>
        <name>2-oxoglutarate</name>
        <dbReference type="ChEBI" id="CHEBI:16810"/>
    </ligand>
</feature>
<keyword id="KW-0223">Dioxygenase</keyword>
<keyword id="KW-0408">Iron</keyword>
<keyword id="KW-0479">Metal-binding</keyword>
<keyword id="KW-0560">Oxidoreductase</keyword>
<keyword id="KW-1185">Reference proteome</keyword>
<keyword id="KW-0847">Vitamin C</keyword>
<organism>
    <name type="scientific">Stutzerimonas stutzeri (strain A1501)</name>
    <name type="common">Pseudomonas stutzeri</name>
    <dbReference type="NCBI Taxonomy" id="379731"/>
    <lineage>
        <taxon>Bacteria</taxon>
        <taxon>Pseudomonadati</taxon>
        <taxon>Pseudomonadota</taxon>
        <taxon>Gammaproteobacteria</taxon>
        <taxon>Pseudomonadales</taxon>
        <taxon>Pseudomonadaceae</taxon>
        <taxon>Stutzerimonas</taxon>
    </lineage>
</organism>
<proteinExistence type="inferred from homology"/>
<reference key="1">
    <citation type="journal article" date="2008" name="Proc. Natl. Acad. Sci. U.S.A.">
        <title>Nitrogen fixation island and rhizosphere competence traits in the genome of root-associated Pseudomonas stutzeri A1501.</title>
        <authorList>
            <person name="Yan Y."/>
            <person name="Yang J."/>
            <person name="Dou Y."/>
            <person name="Chen M."/>
            <person name="Ping S."/>
            <person name="Peng J."/>
            <person name="Lu W."/>
            <person name="Zhang W."/>
            <person name="Yao Z."/>
            <person name="Li H."/>
            <person name="Liu W."/>
            <person name="He S."/>
            <person name="Geng L."/>
            <person name="Zhang X."/>
            <person name="Yang F."/>
            <person name="Yu H."/>
            <person name="Zhan Y."/>
            <person name="Li D."/>
            <person name="Lin Z."/>
            <person name="Wang Y."/>
            <person name="Elmerich C."/>
            <person name="Lin M."/>
            <person name="Jin Q."/>
        </authorList>
    </citation>
    <scope>NUCLEOTIDE SEQUENCE [LARGE SCALE GENOMIC DNA]</scope>
    <source>
        <strain>A1501</strain>
    </source>
</reference>